<proteinExistence type="evidence at protein level"/>
<protein>
    <recommendedName>
        <fullName evidence="5">Periviscerokinin-2</fullName>
    </recommendedName>
</protein>
<dbReference type="GO" id="GO:0005576">
    <property type="term" value="C:extracellular region"/>
    <property type="evidence" value="ECO:0007669"/>
    <property type="project" value="UniProtKB-SubCell"/>
</dbReference>
<dbReference type="GO" id="GO:0007218">
    <property type="term" value="P:neuropeptide signaling pathway"/>
    <property type="evidence" value="ECO:0007669"/>
    <property type="project" value="UniProtKB-KW"/>
</dbReference>
<dbReference type="InterPro" id="IPR013231">
    <property type="entry name" value="Periviscerokinin"/>
</dbReference>
<dbReference type="Pfam" id="PF08259">
    <property type="entry name" value="Periviscerokin"/>
    <property type="match status" value="1"/>
</dbReference>
<keyword id="KW-0027">Amidation</keyword>
<keyword id="KW-0903">Direct protein sequencing</keyword>
<keyword id="KW-0527">Neuropeptide</keyword>
<keyword id="KW-0964">Secreted</keyword>
<organism>
    <name type="scientific">Episcopomantis chalybea</name>
    <name type="common">Double-coned grass mantid</name>
    <name type="synonym">Schizocephala chalybea</name>
    <dbReference type="NCBI Taxonomy" id="267161"/>
    <lineage>
        <taxon>Eukaryota</taxon>
        <taxon>Metazoa</taxon>
        <taxon>Ecdysozoa</taxon>
        <taxon>Arthropoda</taxon>
        <taxon>Hexapoda</taxon>
        <taxon>Insecta</taxon>
        <taxon>Pterygota</taxon>
        <taxon>Neoptera</taxon>
        <taxon>Polyneoptera</taxon>
        <taxon>Dictyoptera</taxon>
        <taxon>Mantodea</taxon>
        <taxon>Eumantodea</taxon>
        <taxon>Eremiaphiloidea</taxon>
        <taxon>Eremiaphilidae</taxon>
        <taxon>Tarachodinae</taxon>
        <taxon>Episcopomantis</taxon>
    </lineage>
</organism>
<reference evidence="6" key="1">
    <citation type="journal article" date="2010" name="Peptides">
        <title>CAPA-peptides of praying mantids (Mantodea).</title>
        <authorList>
            <person name="Koehler R."/>
            <person name="Predel R."/>
        </authorList>
    </citation>
    <scope>PROTEIN SEQUENCE</scope>
    <scope>MASS SPECTROMETRY</scope>
    <scope>AMIDATION AT VAL-11</scope>
    <source>
        <tissue evidence="4">Abdominal perisympathetic organs</tissue>
    </source>
</reference>
<comment type="function">
    <text evidence="1">Mediates visceral muscle contractile activity (myotropic activity).</text>
</comment>
<comment type="subcellular location">
    <subcellularLocation>
        <location evidence="2">Secreted</location>
    </subcellularLocation>
</comment>
<comment type="mass spectrometry"/>
<comment type="similarity">
    <text evidence="3">Belongs to the periviscerokinin family.</text>
</comment>
<sequence>GASGLIAFPRV</sequence>
<accession>P86652</accession>
<feature type="peptide" id="PRO_0000395585" description="Periviscerokinin-2" evidence="4">
    <location>
        <begin position="1"/>
        <end position="11"/>
    </location>
</feature>
<feature type="modified residue" description="Valine amide" evidence="4">
    <location>
        <position position="11"/>
    </location>
</feature>
<feature type="unsure residue" description="L or I" evidence="4">
    <location>
        <position position="5"/>
    </location>
</feature>
<feature type="unsure residue" description="I or L" evidence="4">
    <location>
        <position position="6"/>
    </location>
</feature>
<name>PVK2_EPICH</name>
<evidence type="ECO:0000250" key="1">
    <source>
        <dbReference type="UniProtKB" id="P83923"/>
    </source>
</evidence>
<evidence type="ECO:0000250" key="2">
    <source>
        <dbReference type="UniProtKB" id="P84375"/>
    </source>
</evidence>
<evidence type="ECO:0000255" key="3"/>
<evidence type="ECO:0000269" key="4">
    <source>
    </source>
</evidence>
<evidence type="ECO:0000303" key="5">
    <source>
    </source>
</evidence>
<evidence type="ECO:0000305" key="6"/>